<comment type="function">
    <text evidence="2">Kinase that can phosphorylate various inositol polyphosphate such as Ins(3,4,5,6)P4 or Ins(1,3,4)P3 and participates in phytic acid biosynthesis in developing seeds. Phytic acid is the primary storage form of phosphorus in cereal grains and other plant seeds.</text>
</comment>
<comment type="catalytic activity">
    <reaction evidence="8">
        <text>1D-myo-inositol 3,4,5,6-tetrakisphosphate + ATP = 1D-myo-inositol 1,3,4,5,6-pentakisphosphate + ADP + H(+)</text>
        <dbReference type="Rhea" id="RHEA:12452"/>
        <dbReference type="ChEBI" id="CHEBI:15378"/>
        <dbReference type="ChEBI" id="CHEBI:30616"/>
        <dbReference type="ChEBI" id="CHEBI:57539"/>
        <dbReference type="ChEBI" id="CHEBI:57733"/>
        <dbReference type="ChEBI" id="CHEBI:456216"/>
        <dbReference type="EC" id="2.7.1.134"/>
    </reaction>
</comment>
<comment type="catalytic activity">
    <reaction evidence="8">
        <text>1D-myo-inositol 1,3,4-trisphosphate + ATP = 1D-myo-inositol 1,3,4,5-tetrakisphosphate + ADP + H(+)</text>
        <dbReference type="Rhea" id="RHEA:13253"/>
        <dbReference type="ChEBI" id="CHEBI:15378"/>
        <dbReference type="ChEBI" id="CHEBI:30616"/>
        <dbReference type="ChEBI" id="CHEBI:57895"/>
        <dbReference type="ChEBI" id="CHEBI:58414"/>
        <dbReference type="ChEBI" id="CHEBI:456216"/>
        <dbReference type="EC" id="2.7.1.159"/>
    </reaction>
</comment>
<comment type="catalytic activity">
    <reaction evidence="8">
        <text>1D-myo-inositol 1,3,4-trisphosphate + ATP = 1D-myo-inositol 1,3,4,6-tetrakisphosphate + ADP + H(+)</text>
        <dbReference type="Rhea" id="RHEA:20940"/>
        <dbReference type="ChEBI" id="CHEBI:15378"/>
        <dbReference type="ChEBI" id="CHEBI:30616"/>
        <dbReference type="ChEBI" id="CHEBI:57660"/>
        <dbReference type="ChEBI" id="CHEBI:58414"/>
        <dbReference type="ChEBI" id="CHEBI:456216"/>
        <dbReference type="EC" id="2.7.1.159"/>
    </reaction>
</comment>
<comment type="cofactor">
    <cofactor evidence="1">
        <name>Mg(2+)</name>
        <dbReference type="ChEBI" id="CHEBI:18420"/>
    </cofactor>
    <text evidence="1">Binds 2 magnesium ions per subunit.</text>
</comment>
<comment type="subunit">
    <text evidence="1">Monomer.</text>
</comment>
<comment type="tissue specificity">
    <text evidence="4">Expressed in roots, leaves, flowers, anthers and embryos.</text>
</comment>
<comment type="induction">
    <text evidence="5">By drought stress.</text>
</comment>
<comment type="similarity">
    <text evidence="8">Belongs to the ITPK1 family.</text>
</comment>
<comment type="sequence caution" evidence="8">
    <conflict type="erroneous initiation">
        <sequence resource="EMBL-CDS" id="EEE59845"/>
    </conflict>
    <text>Truncated N-terminus.</text>
</comment>
<keyword id="KW-0067">ATP-binding</keyword>
<keyword id="KW-0418">Kinase</keyword>
<keyword id="KW-0460">Magnesium</keyword>
<keyword id="KW-0479">Metal-binding</keyword>
<keyword id="KW-0547">Nucleotide-binding</keyword>
<keyword id="KW-1185">Reference proteome</keyword>
<keyword id="KW-0808">Transferase</keyword>
<organism>
    <name type="scientific">Oryza sativa subsp. japonica</name>
    <name type="common">Rice</name>
    <dbReference type="NCBI Taxonomy" id="39947"/>
    <lineage>
        <taxon>Eukaryota</taxon>
        <taxon>Viridiplantae</taxon>
        <taxon>Streptophyta</taxon>
        <taxon>Embryophyta</taxon>
        <taxon>Tracheophyta</taxon>
        <taxon>Spermatophyta</taxon>
        <taxon>Magnoliopsida</taxon>
        <taxon>Liliopsida</taxon>
        <taxon>Poales</taxon>
        <taxon>Poaceae</taxon>
        <taxon>BOP clade</taxon>
        <taxon>Oryzoideae</taxon>
        <taxon>Oryzeae</taxon>
        <taxon>Oryzinae</taxon>
        <taxon>Oryza</taxon>
        <taxon>Oryza sativa</taxon>
    </lineage>
</organism>
<sequence>MVSGGRVGGGEGEAGEAAEVAVAMVDNEEEMAQAQAPPAAAVAARELVVGYALTSKKAKSFLQPKLRGLARKKGILFVAIDQKRPLSDQGPFDIVLHKLTGREWQQLLEEYREEHPEVTVLDPPGAIEHLLNRQSMLQEVSELDLSDCHGRVGVPKQLFVNTDPSSIPAAVMRAGLSLPLVAKPLVAKSHELSLAYDPISLTKLEPPLVLQEFVNHGGVLFKVYIVGDAIRVVRRFSLPNVDVGDLSNNAGVFRFPRVSCASANADDADLDPHVAELPPRPLLEILARELRRRLGLRLFNIDMIREHGTRDRFYVIDMNYFPGYGKMPGYEHVFTDFLLSLVQKEYKRRPSYSSCEG</sequence>
<evidence type="ECO:0000250" key="1">
    <source>
        <dbReference type="UniProtKB" id="Q13572"/>
    </source>
</evidence>
<evidence type="ECO:0000250" key="2">
    <source>
        <dbReference type="UniProtKB" id="Q84Y01"/>
    </source>
</evidence>
<evidence type="ECO:0000250" key="3">
    <source>
        <dbReference type="UniProtKB" id="Q9XYQ1"/>
    </source>
</evidence>
<evidence type="ECO:0000269" key="4">
    <source>
    </source>
</evidence>
<evidence type="ECO:0000269" key="5">
    <source>
    </source>
</evidence>
<evidence type="ECO:0000303" key="6">
    <source>
    </source>
</evidence>
<evidence type="ECO:0000303" key="7">
    <source>
    </source>
</evidence>
<evidence type="ECO:0000305" key="8"/>
<evidence type="ECO:0000312" key="9">
    <source>
        <dbReference type="EMBL" id="AAS07160.1"/>
    </source>
</evidence>
<evidence type="ECO:0000312" key="10">
    <source>
        <dbReference type="EMBL" id="AAT77080.1"/>
    </source>
</evidence>
<evidence type="ECO:0000312" key="11">
    <source>
        <dbReference type="EMBL" id="ABF98644.1"/>
    </source>
</evidence>
<evidence type="ECO:0000312" key="12">
    <source>
        <dbReference type="EMBL" id="BAF13047.1"/>
    </source>
</evidence>
<evidence type="ECO:0000312" key="13">
    <source>
        <dbReference type="EMBL" id="EEE59845.1"/>
    </source>
</evidence>
<name>ITPK3_ORYSJ</name>
<gene>
    <name evidence="7" type="primary">ITPK3</name>
    <name evidence="6" type="synonym">ITP5/6K-3</name>
    <name evidence="12" type="ordered locus">Os03g0726200</name>
    <name evidence="11" type="ordered locus">LOC_Os03g51610</name>
    <name evidence="13" type="ORF">OsJ_12420</name>
    <name evidence="9" type="ORF">OSJNBa0013A09.13</name>
    <name evidence="10" type="ORF">OSJNBb0122C16.11</name>
</gene>
<proteinExistence type="evidence at transcript level"/>
<feature type="chain" id="PRO_0000431873" description="Inositol-tetrakisphosphate 1-kinase 3">
    <location>
        <begin position="1"/>
        <end position="357"/>
    </location>
</feature>
<feature type="binding site" evidence="3">
    <location>
        <position position="56"/>
    </location>
    <ligand>
        <name>1D-myo-inositol 1,3,4-trisphosphate</name>
        <dbReference type="ChEBI" id="CHEBI:58414"/>
    </ligand>
</feature>
<feature type="binding site" evidence="3">
    <location>
        <position position="98"/>
    </location>
    <ligand>
        <name>1D-myo-inositol 1,3,4-trisphosphate</name>
        <dbReference type="ChEBI" id="CHEBI:58414"/>
    </ligand>
</feature>
<feature type="binding site" evidence="1">
    <location>
        <position position="133"/>
    </location>
    <ligand>
        <name>ATP</name>
        <dbReference type="ChEBI" id="CHEBI:30616"/>
    </ligand>
</feature>
<feature type="binding site" evidence="1">
    <location>
        <position position="183"/>
    </location>
    <ligand>
        <name>ATP</name>
        <dbReference type="ChEBI" id="CHEBI:30616"/>
    </ligand>
</feature>
<feature type="binding site" evidence="3">
    <location>
        <position position="190"/>
    </location>
    <ligand>
        <name>1D-myo-inositol 1,3,4-trisphosphate</name>
        <dbReference type="ChEBI" id="CHEBI:58414"/>
    </ligand>
</feature>
<feature type="binding site" evidence="1">
    <location>
        <begin position="211"/>
        <end position="222"/>
    </location>
    <ligand>
        <name>ATP</name>
        <dbReference type="ChEBI" id="CHEBI:30616"/>
    </ligand>
</feature>
<feature type="binding site" evidence="3">
    <location>
        <position position="222"/>
    </location>
    <ligand>
        <name>1D-myo-inositol 1,3,4-trisphosphate</name>
        <dbReference type="ChEBI" id="CHEBI:58414"/>
    </ligand>
</feature>
<feature type="binding site" evidence="1">
    <location>
        <position position="237"/>
    </location>
    <ligand>
        <name>ATP</name>
        <dbReference type="ChEBI" id="CHEBI:30616"/>
    </ligand>
</feature>
<feature type="binding site" evidence="1">
    <location>
        <position position="262"/>
    </location>
    <ligand>
        <name>ATP</name>
        <dbReference type="ChEBI" id="CHEBI:30616"/>
    </ligand>
</feature>
<feature type="binding site" evidence="1">
    <location>
        <position position="302"/>
    </location>
    <ligand>
        <name>Mg(2+)</name>
        <dbReference type="ChEBI" id="CHEBI:18420"/>
        <label>1</label>
    </ligand>
</feature>
<feature type="binding site" evidence="1">
    <location>
        <position position="317"/>
    </location>
    <ligand>
        <name>Mg(2+)</name>
        <dbReference type="ChEBI" id="CHEBI:18420"/>
        <label>1</label>
    </ligand>
</feature>
<feature type="binding site" evidence="1">
    <location>
        <position position="317"/>
    </location>
    <ligand>
        <name>Mg(2+)</name>
        <dbReference type="ChEBI" id="CHEBI:18420"/>
        <label>2</label>
    </ligand>
</feature>
<feature type="binding site" evidence="3">
    <location>
        <position position="319"/>
    </location>
    <ligand>
        <name>1D-myo-inositol 1,3,4-trisphosphate</name>
        <dbReference type="ChEBI" id="CHEBI:58414"/>
    </ligand>
</feature>
<feature type="binding site" evidence="1">
    <location>
        <position position="319"/>
    </location>
    <ligand>
        <name>Mg(2+)</name>
        <dbReference type="ChEBI" id="CHEBI:18420"/>
        <label>2</label>
    </ligand>
</feature>
<reference key="1">
    <citation type="journal article" date="2005" name="Genome Res.">
        <title>Sequence, annotation, and analysis of synteny between rice chromosome 3 and diverged grass species.</title>
        <authorList>
            <consortium name="The rice chromosome 3 sequencing consortium"/>
            <person name="Buell C.R."/>
            <person name="Yuan Q."/>
            <person name="Ouyang S."/>
            <person name="Liu J."/>
            <person name="Zhu W."/>
            <person name="Wang A."/>
            <person name="Maiti R."/>
            <person name="Haas B."/>
            <person name="Wortman J."/>
            <person name="Pertea M."/>
            <person name="Jones K.M."/>
            <person name="Kim M."/>
            <person name="Overton L."/>
            <person name="Tsitrin T."/>
            <person name="Fadrosh D."/>
            <person name="Bera J."/>
            <person name="Weaver B."/>
            <person name="Jin S."/>
            <person name="Johri S."/>
            <person name="Reardon M."/>
            <person name="Webb K."/>
            <person name="Hill J."/>
            <person name="Moffat K."/>
            <person name="Tallon L."/>
            <person name="Van Aken S."/>
            <person name="Lewis M."/>
            <person name="Utterback T."/>
            <person name="Feldblyum T."/>
            <person name="Zismann V."/>
            <person name="Iobst S."/>
            <person name="Hsiao J."/>
            <person name="de Vazeille A.R."/>
            <person name="Salzberg S.L."/>
            <person name="White O."/>
            <person name="Fraser C.M."/>
            <person name="Yu Y."/>
            <person name="Kim H."/>
            <person name="Rambo T."/>
            <person name="Currie J."/>
            <person name="Collura K."/>
            <person name="Kernodle-Thompson S."/>
            <person name="Wei F."/>
            <person name="Kudrna K."/>
            <person name="Ammiraju J.S.S."/>
            <person name="Luo M."/>
            <person name="Goicoechea J.L."/>
            <person name="Wing R.A."/>
            <person name="Henry D."/>
            <person name="Oates R."/>
            <person name="Palmer M."/>
            <person name="Pries G."/>
            <person name="Saski C."/>
            <person name="Simmons J."/>
            <person name="Soderlund C."/>
            <person name="Nelson W."/>
            <person name="de la Bastide M."/>
            <person name="Spiegel L."/>
            <person name="Nascimento L."/>
            <person name="Huang E."/>
            <person name="Preston R."/>
            <person name="Zutavern T."/>
            <person name="Palmer L."/>
            <person name="O'Shaughnessy A."/>
            <person name="Dike S."/>
            <person name="McCombie W.R."/>
            <person name="Minx P."/>
            <person name="Cordum H."/>
            <person name="Wilson R."/>
            <person name="Jin W."/>
            <person name="Lee H.R."/>
            <person name="Jiang J."/>
            <person name="Jackson S."/>
        </authorList>
    </citation>
    <scope>NUCLEOTIDE SEQUENCE [LARGE SCALE GENOMIC DNA]</scope>
    <source>
        <strain>cv. Nipponbare</strain>
    </source>
</reference>
<reference key="2">
    <citation type="journal article" date="2005" name="Nature">
        <title>The map-based sequence of the rice genome.</title>
        <authorList>
            <consortium name="International rice genome sequencing project (IRGSP)"/>
        </authorList>
    </citation>
    <scope>NUCLEOTIDE SEQUENCE [LARGE SCALE GENOMIC DNA]</scope>
    <source>
        <strain>cv. Nipponbare</strain>
    </source>
</reference>
<reference key="3">
    <citation type="journal article" date="2008" name="Nucleic Acids Res.">
        <title>The rice annotation project database (RAP-DB): 2008 update.</title>
        <authorList>
            <consortium name="The rice annotation project (RAP)"/>
        </authorList>
    </citation>
    <scope>GENOME REANNOTATION</scope>
    <source>
        <strain>cv. Nipponbare</strain>
    </source>
</reference>
<reference key="4">
    <citation type="journal article" date="2013" name="Rice">
        <title>Improvement of the Oryza sativa Nipponbare reference genome using next generation sequence and optical map data.</title>
        <authorList>
            <person name="Kawahara Y."/>
            <person name="de la Bastide M."/>
            <person name="Hamilton J.P."/>
            <person name="Kanamori H."/>
            <person name="McCombie W.R."/>
            <person name="Ouyang S."/>
            <person name="Schwartz D.C."/>
            <person name="Tanaka T."/>
            <person name="Wu J."/>
            <person name="Zhou S."/>
            <person name="Childs K.L."/>
            <person name="Davidson R.M."/>
            <person name="Lin H."/>
            <person name="Quesada-Ocampo L."/>
            <person name="Vaillancourt B."/>
            <person name="Sakai H."/>
            <person name="Lee S.S."/>
            <person name="Kim J."/>
            <person name="Numa H."/>
            <person name="Itoh T."/>
            <person name="Buell C.R."/>
            <person name="Matsumoto T."/>
        </authorList>
    </citation>
    <scope>GENOME REANNOTATION</scope>
    <source>
        <strain>cv. Nipponbare</strain>
    </source>
</reference>
<reference key="5">
    <citation type="journal article" date="2005" name="PLoS Biol.">
        <title>The genomes of Oryza sativa: a history of duplications.</title>
        <authorList>
            <person name="Yu J."/>
            <person name="Wang J."/>
            <person name="Lin W."/>
            <person name="Li S."/>
            <person name="Li H."/>
            <person name="Zhou J."/>
            <person name="Ni P."/>
            <person name="Dong W."/>
            <person name="Hu S."/>
            <person name="Zeng C."/>
            <person name="Zhang J."/>
            <person name="Zhang Y."/>
            <person name="Li R."/>
            <person name="Xu Z."/>
            <person name="Li S."/>
            <person name="Li X."/>
            <person name="Zheng H."/>
            <person name="Cong L."/>
            <person name="Lin L."/>
            <person name="Yin J."/>
            <person name="Geng J."/>
            <person name="Li G."/>
            <person name="Shi J."/>
            <person name="Liu J."/>
            <person name="Lv H."/>
            <person name="Li J."/>
            <person name="Wang J."/>
            <person name="Deng Y."/>
            <person name="Ran L."/>
            <person name="Shi X."/>
            <person name="Wang X."/>
            <person name="Wu Q."/>
            <person name="Li C."/>
            <person name="Ren X."/>
            <person name="Wang J."/>
            <person name="Wang X."/>
            <person name="Li D."/>
            <person name="Liu D."/>
            <person name="Zhang X."/>
            <person name="Ji Z."/>
            <person name="Zhao W."/>
            <person name="Sun Y."/>
            <person name="Zhang Z."/>
            <person name="Bao J."/>
            <person name="Han Y."/>
            <person name="Dong L."/>
            <person name="Ji J."/>
            <person name="Chen P."/>
            <person name="Wu S."/>
            <person name="Liu J."/>
            <person name="Xiao Y."/>
            <person name="Bu D."/>
            <person name="Tan J."/>
            <person name="Yang L."/>
            <person name="Ye C."/>
            <person name="Zhang J."/>
            <person name="Xu J."/>
            <person name="Zhou Y."/>
            <person name="Yu Y."/>
            <person name="Zhang B."/>
            <person name="Zhuang S."/>
            <person name="Wei H."/>
            <person name="Liu B."/>
            <person name="Lei M."/>
            <person name="Yu H."/>
            <person name="Li Y."/>
            <person name="Xu H."/>
            <person name="Wei S."/>
            <person name="He X."/>
            <person name="Fang L."/>
            <person name="Zhang Z."/>
            <person name="Zhang Y."/>
            <person name="Huang X."/>
            <person name="Su Z."/>
            <person name="Tong W."/>
            <person name="Li J."/>
            <person name="Tong Z."/>
            <person name="Li S."/>
            <person name="Ye J."/>
            <person name="Wang L."/>
            <person name="Fang L."/>
            <person name="Lei T."/>
            <person name="Chen C.-S."/>
            <person name="Chen H.-C."/>
            <person name="Xu Z."/>
            <person name="Li H."/>
            <person name="Huang H."/>
            <person name="Zhang F."/>
            <person name="Xu H."/>
            <person name="Li N."/>
            <person name="Zhao C."/>
            <person name="Li S."/>
            <person name="Dong L."/>
            <person name="Huang Y."/>
            <person name="Li L."/>
            <person name="Xi Y."/>
            <person name="Qi Q."/>
            <person name="Li W."/>
            <person name="Zhang B."/>
            <person name="Hu W."/>
            <person name="Zhang Y."/>
            <person name="Tian X."/>
            <person name="Jiao Y."/>
            <person name="Liang X."/>
            <person name="Jin J."/>
            <person name="Gao L."/>
            <person name="Zheng W."/>
            <person name="Hao B."/>
            <person name="Liu S.-M."/>
            <person name="Wang W."/>
            <person name="Yuan L."/>
            <person name="Cao M."/>
            <person name="McDermott J."/>
            <person name="Samudrala R."/>
            <person name="Wang J."/>
            <person name="Wong G.K.-S."/>
            <person name="Yang H."/>
        </authorList>
    </citation>
    <scope>NUCLEOTIDE SEQUENCE [LARGE SCALE GENOMIC DNA]</scope>
    <source>
        <strain>cv. Nipponbare</strain>
    </source>
</reference>
<reference key="6">
    <citation type="journal article" date="2003" name="Science">
        <title>Collection, mapping, and annotation of over 28,000 cDNA clones from japonica rice.</title>
        <authorList>
            <consortium name="The rice full-length cDNA consortium"/>
        </authorList>
    </citation>
    <scope>NUCLEOTIDE SEQUENCE [LARGE SCALE MRNA]</scope>
    <source>
        <strain>cv. Nipponbare</strain>
    </source>
</reference>
<reference key="7">
    <citation type="journal article" date="2007" name="Gene">
        <title>Expression pattern of inositol phosphate-related enzymes in rice (Oryza sativa L.): implications for the phytic acid biosynthetic pathway.</title>
        <authorList>
            <person name="Suzuki M."/>
            <person name="Tanaka K."/>
            <person name="Kuwano M."/>
            <person name="Yoshida K.T."/>
        </authorList>
    </citation>
    <scope>TISSUE SPECIFICITY</scope>
    <scope>GENE FAMILY</scope>
    <scope>NOMENCLATURE</scope>
</reference>
<reference key="8">
    <citation type="journal article" date="2011" name="Plant Mol. Biol.">
        <title>Characterization of an inositol 1,3,4-trisphosphate 5/6-kinase gene that is essential for drought and salt stress responses in rice.</title>
        <authorList>
            <person name="Du H."/>
            <person name="Liu L."/>
            <person name="You L."/>
            <person name="Yang M."/>
            <person name="He Y."/>
            <person name="Li X."/>
            <person name="Xiong L."/>
        </authorList>
    </citation>
    <scope>INDUCTION</scope>
    <scope>GENE FAMILY</scope>
    <scope>NOMENCLATURE</scope>
</reference>
<dbReference type="EC" id="2.7.1.134" evidence="8"/>
<dbReference type="EC" id="2.7.1.159" evidence="8"/>
<dbReference type="EMBL" id="AC135228">
    <property type="protein sequence ID" value="AAT77080.1"/>
    <property type="molecule type" value="Genomic_DNA"/>
</dbReference>
<dbReference type="EMBL" id="AC145380">
    <property type="protein sequence ID" value="AAS07160.1"/>
    <property type="molecule type" value="Genomic_DNA"/>
</dbReference>
<dbReference type="EMBL" id="DP000009">
    <property type="protein sequence ID" value="ABF98644.1"/>
    <property type="molecule type" value="Genomic_DNA"/>
</dbReference>
<dbReference type="EMBL" id="AP008209">
    <property type="protein sequence ID" value="BAF13047.1"/>
    <property type="molecule type" value="Genomic_DNA"/>
</dbReference>
<dbReference type="EMBL" id="AP014959">
    <property type="protein sequence ID" value="BAS86174.1"/>
    <property type="molecule type" value="Genomic_DNA"/>
</dbReference>
<dbReference type="EMBL" id="CM000140">
    <property type="protein sequence ID" value="EEE59845.1"/>
    <property type="status" value="ALT_INIT"/>
    <property type="molecule type" value="Genomic_DNA"/>
</dbReference>
<dbReference type="EMBL" id="AK067068">
    <property type="protein sequence ID" value="BAG90250.1"/>
    <property type="molecule type" value="mRNA"/>
</dbReference>
<dbReference type="RefSeq" id="NP_001405549.1">
    <property type="nucleotide sequence ID" value="NM_001418620.1"/>
</dbReference>
<dbReference type="RefSeq" id="XP_015630337.1">
    <property type="nucleotide sequence ID" value="XM_015774851.1"/>
</dbReference>
<dbReference type="SMR" id="Q75GI4"/>
<dbReference type="FunCoup" id="Q75GI4">
    <property type="interactions" value="554"/>
</dbReference>
<dbReference type="STRING" id="39947.Q75GI4"/>
<dbReference type="PaxDb" id="39947-Q75GI4"/>
<dbReference type="EnsemblPlants" id="Os03t0726200-01">
    <property type="protein sequence ID" value="Os03t0726200-01"/>
    <property type="gene ID" value="Os03g0726200"/>
</dbReference>
<dbReference type="GeneID" id="4333967"/>
<dbReference type="Gramene" id="Os03t0726200-01">
    <property type="protein sequence ID" value="Os03t0726200-01"/>
    <property type="gene ID" value="Os03g0726200"/>
</dbReference>
<dbReference type="KEGG" id="dosa:Os03g0726200"/>
<dbReference type="eggNOG" id="ENOG502QQS1">
    <property type="taxonomic scope" value="Eukaryota"/>
</dbReference>
<dbReference type="HOGENOM" id="CLU_041857_0_0_1"/>
<dbReference type="InParanoid" id="Q75GI4"/>
<dbReference type="OMA" id="QHLYNRQ"/>
<dbReference type="OrthoDB" id="25308at2759"/>
<dbReference type="PlantReactome" id="R-OSA-1119434">
    <property type="pathway name" value="Phytic acid biosynthesis (lipid-independent)"/>
</dbReference>
<dbReference type="Proteomes" id="UP000000763">
    <property type="component" value="Chromosome 3"/>
</dbReference>
<dbReference type="Proteomes" id="UP000007752">
    <property type="component" value="Chromosome 3"/>
</dbReference>
<dbReference type="Proteomes" id="UP000059680">
    <property type="component" value="Chromosome 3"/>
</dbReference>
<dbReference type="ExpressionAtlas" id="Q75GI4">
    <property type="expression patterns" value="baseline and differential"/>
</dbReference>
<dbReference type="GO" id="GO:0005524">
    <property type="term" value="F:ATP binding"/>
    <property type="evidence" value="ECO:0007669"/>
    <property type="project" value="UniProtKB-KW"/>
</dbReference>
<dbReference type="GO" id="GO:0052726">
    <property type="term" value="F:inositol-1,3,4-trisphosphate 5-kinase activity"/>
    <property type="evidence" value="ECO:0000318"/>
    <property type="project" value="GO_Central"/>
</dbReference>
<dbReference type="GO" id="GO:0052725">
    <property type="term" value="F:inositol-1,3,4-trisphosphate 6-kinase activity"/>
    <property type="evidence" value="ECO:0000318"/>
    <property type="project" value="GO_Central"/>
</dbReference>
<dbReference type="GO" id="GO:0047325">
    <property type="term" value="F:inositol-3,4,5,6-tetrakisphosphate 1-kinase activity"/>
    <property type="evidence" value="ECO:0000318"/>
    <property type="project" value="GO_Central"/>
</dbReference>
<dbReference type="GO" id="GO:0000287">
    <property type="term" value="F:magnesium ion binding"/>
    <property type="evidence" value="ECO:0007669"/>
    <property type="project" value="InterPro"/>
</dbReference>
<dbReference type="GO" id="GO:0032957">
    <property type="term" value="P:inositol trisphosphate metabolic process"/>
    <property type="evidence" value="ECO:0007669"/>
    <property type="project" value="InterPro"/>
</dbReference>
<dbReference type="Gene3D" id="3.30.470.20">
    <property type="entry name" value="ATP-grasp fold, B domain"/>
    <property type="match status" value="1"/>
</dbReference>
<dbReference type="InterPro" id="IPR008656">
    <property type="entry name" value="Inositol_tetrakis-P_1-kinase"/>
</dbReference>
<dbReference type="InterPro" id="IPR040464">
    <property type="entry name" value="InsP(3)kin_ATP-grasp"/>
</dbReference>
<dbReference type="InterPro" id="IPR041429">
    <property type="entry name" value="ITPK1_N"/>
</dbReference>
<dbReference type="PANTHER" id="PTHR14217">
    <property type="entry name" value="INOSITOL-TETRAKISPHOSPHATE 1-KINASE"/>
    <property type="match status" value="1"/>
</dbReference>
<dbReference type="PANTHER" id="PTHR14217:SF36">
    <property type="entry name" value="INOSITOL-TETRAKISPHOSPHATE 1-KINASE 3"/>
    <property type="match status" value="1"/>
</dbReference>
<dbReference type="Pfam" id="PF05770">
    <property type="entry name" value="Ins134_P3_kin"/>
    <property type="match status" value="1"/>
</dbReference>
<dbReference type="Pfam" id="PF17927">
    <property type="entry name" value="Ins134_P3_kin_N"/>
    <property type="match status" value="1"/>
</dbReference>
<dbReference type="PIRSF" id="PIRSF038186">
    <property type="entry name" value="ITPK"/>
    <property type="match status" value="1"/>
</dbReference>
<dbReference type="SUPFAM" id="SSF56059">
    <property type="entry name" value="Glutathione synthetase ATP-binding domain-like"/>
    <property type="match status" value="1"/>
</dbReference>
<accession>Q75GI4</accession>
<accession>A0A0P0W2G1</accession>
<accession>B9FBA7</accession>
<protein>
    <recommendedName>
        <fullName evidence="8">Inositol-tetrakisphosphate 1-kinase 3</fullName>
        <ecNumber evidence="8">2.7.1.134</ecNumber>
    </recommendedName>
    <alternativeName>
        <fullName evidence="8">Inositol 1,3,4-trisphosphate 5/6-kinase 3</fullName>
        <shortName evidence="8">Inositol-triphosphate 5/6-kinase 3</shortName>
        <shortName evidence="8">Ins(1,3,4)P(3) 5/6-kinase 3</shortName>
        <shortName evidence="6">OsITP5/6K-3</shortName>
        <shortName evidence="7">OsITPK3</shortName>
        <ecNumber evidence="8">2.7.1.159</ecNumber>
    </alternativeName>
</protein>